<reference key="1">
    <citation type="submission" date="2008-10" db="EMBL/GenBank/DDBJ databases">
        <title>Genome sequence of Bacillus anthracis str. CDC 684.</title>
        <authorList>
            <person name="Dodson R.J."/>
            <person name="Munk A.C."/>
            <person name="Brettin T."/>
            <person name="Bruce D."/>
            <person name="Detter C."/>
            <person name="Tapia R."/>
            <person name="Han C."/>
            <person name="Sutton G."/>
            <person name="Sims D."/>
        </authorList>
    </citation>
    <scope>NUCLEOTIDE SEQUENCE [LARGE SCALE GENOMIC DNA]</scope>
    <source>
        <strain>CDC 684 / NRRL 3495</strain>
    </source>
</reference>
<name>RL19_BACAC</name>
<evidence type="ECO:0000255" key="1">
    <source>
        <dbReference type="HAMAP-Rule" id="MF_00402"/>
    </source>
</evidence>
<evidence type="ECO:0000305" key="2"/>
<gene>
    <name evidence="1" type="primary">rplS</name>
    <name type="ordered locus">BAMEG_0654</name>
</gene>
<feature type="chain" id="PRO_1000134554" description="Large ribosomal subunit protein bL19">
    <location>
        <begin position="1"/>
        <end position="114"/>
    </location>
</feature>
<organism>
    <name type="scientific">Bacillus anthracis (strain CDC 684 / NRRL 3495)</name>
    <dbReference type="NCBI Taxonomy" id="568206"/>
    <lineage>
        <taxon>Bacteria</taxon>
        <taxon>Bacillati</taxon>
        <taxon>Bacillota</taxon>
        <taxon>Bacilli</taxon>
        <taxon>Bacillales</taxon>
        <taxon>Bacillaceae</taxon>
        <taxon>Bacillus</taxon>
        <taxon>Bacillus cereus group</taxon>
    </lineage>
</organism>
<proteinExistence type="inferred from homology"/>
<protein>
    <recommendedName>
        <fullName evidence="1">Large ribosomal subunit protein bL19</fullName>
    </recommendedName>
    <alternativeName>
        <fullName evidence="2">50S ribosomal protein L19</fullName>
    </alternativeName>
</protein>
<dbReference type="EMBL" id="CP001215">
    <property type="protein sequence ID" value="ACP15725.1"/>
    <property type="molecule type" value="Genomic_DNA"/>
</dbReference>
<dbReference type="RefSeq" id="WP_001186516.1">
    <property type="nucleotide sequence ID" value="NC_012581.1"/>
</dbReference>
<dbReference type="SMR" id="C3L787"/>
<dbReference type="GeneID" id="93007272"/>
<dbReference type="KEGG" id="bah:BAMEG_0654"/>
<dbReference type="HOGENOM" id="CLU_103507_2_1_9"/>
<dbReference type="GO" id="GO:0022625">
    <property type="term" value="C:cytosolic large ribosomal subunit"/>
    <property type="evidence" value="ECO:0007669"/>
    <property type="project" value="TreeGrafter"/>
</dbReference>
<dbReference type="GO" id="GO:0003735">
    <property type="term" value="F:structural constituent of ribosome"/>
    <property type="evidence" value="ECO:0007669"/>
    <property type="project" value="InterPro"/>
</dbReference>
<dbReference type="GO" id="GO:0006412">
    <property type="term" value="P:translation"/>
    <property type="evidence" value="ECO:0007669"/>
    <property type="project" value="UniProtKB-UniRule"/>
</dbReference>
<dbReference type="FunFam" id="2.30.30.790:FF:000001">
    <property type="entry name" value="50S ribosomal protein L19"/>
    <property type="match status" value="1"/>
</dbReference>
<dbReference type="Gene3D" id="2.30.30.790">
    <property type="match status" value="1"/>
</dbReference>
<dbReference type="HAMAP" id="MF_00402">
    <property type="entry name" value="Ribosomal_bL19"/>
    <property type="match status" value="1"/>
</dbReference>
<dbReference type="InterPro" id="IPR001857">
    <property type="entry name" value="Ribosomal_bL19"/>
</dbReference>
<dbReference type="InterPro" id="IPR018257">
    <property type="entry name" value="Ribosomal_bL19_CS"/>
</dbReference>
<dbReference type="InterPro" id="IPR038657">
    <property type="entry name" value="Ribosomal_bL19_sf"/>
</dbReference>
<dbReference type="InterPro" id="IPR008991">
    <property type="entry name" value="Translation_prot_SH3-like_sf"/>
</dbReference>
<dbReference type="NCBIfam" id="TIGR01024">
    <property type="entry name" value="rplS_bact"/>
    <property type="match status" value="1"/>
</dbReference>
<dbReference type="PANTHER" id="PTHR15680:SF9">
    <property type="entry name" value="LARGE RIBOSOMAL SUBUNIT PROTEIN BL19M"/>
    <property type="match status" value="1"/>
</dbReference>
<dbReference type="PANTHER" id="PTHR15680">
    <property type="entry name" value="RIBOSOMAL PROTEIN L19"/>
    <property type="match status" value="1"/>
</dbReference>
<dbReference type="Pfam" id="PF01245">
    <property type="entry name" value="Ribosomal_L19"/>
    <property type="match status" value="1"/>
</dbReference>
<dbReference type="PIRSF" id="PIRSF002191">
    <property type="entry name" value="Ribosomal_L19"/>
    <property type="match status" value="1"/>
</dbReference>
<dbReference type="PRINTS" id="PR00061">
    <property type="entry name" value="RIBOSOMALL19"/>
</dbReference>
<dbReference type="SUPFAM" id="SSF50104">
    <property type="entry name" value="Translation proteins SH3-like domain"/>
    <property type="match status" value="1"/>
</dbReference>
<dbReference type="PROSITE" id="PS01015">
    <property type="entry name" value="RIBOSOMAL_L19"/>
    <property type="match status" value="1"/>
</dbReference>
<sequence>MQQLIAEITKGQLKTDLPSFRPGDTLRVHVKVVEGTRERIQLFEGVVIKRRGGGISETFTVRKISYGVGVERTFPVHTPRIAKIEVLRRGKVRRAKLYYLRNLRGKKARIKEIR</sequence>
<accession>C3L787</accession>
<keyword id="KW-0687">Ribonucleoprotein</keyword>
<keyword id="KW-0689">Ribosomal protein</keyword>
<comment type="function">
    <text evidence="1">This protein is located at the 30S-50S ribosomal subunit interface and may play a role in the structure and function of the aminoacyl-tRNA binding site.</text>
</comment>
<comment type="similarity">
    <text evidence="1">Belongs to the bacterial ribosomal protein bL19 family.</text>
</comment>